<evidence type="ECO:0000255" key="1">
    <source>
        <dbReference type="HAMAP-Rule" id="MF_00251"/>
    </source>
</evidence>
<evidence type="ECO:0000305" key="2"/>
<name>RL36_ALCBS</name>
<gene>
    <name evidence="1" type="primary">rpmJ</name>
    <name type="ordered locus">ABO_0418</name>
</gene>
<sequence>MKVQASVKKICRNCKVIRRKGRVMVICSAEPRHKQRQG</sequence>
<feature type="chain" id="PRO_0000302149" description="Large ribosomal subunit protein bL36">
    <location>
        <begin position="1"/>
        <end position="38"/>
    </location>
</feature>
<proteinExistence type="inferred from homology"/>
<protein>
    <recommendedName>
        <fullName evidence="1">Large ribosomal subunit protein bL36</fullName>
    </recommendedName>
    <alternativeName>
        <fullName evidence="2">50S ribosomal protein L36</fullName>
    </alternativeName>
</protein>
<organism>
    <name type="scientific">Alcanivorax borkumensis (strain ATCC 700651 / DSM 11573 / NCIMB 13689 / SK2)</name>
    <dbReference type="NCBI Taxonomy" id="393595"/>
    <lineage>
        <taxon>Bacteria</taxon>
        <taxon>Pseudomonadati</taxon>
        <taxon>Pseudomonadota</taxon>
        <taxon>Gammaproteobacteria</taxon>
        <taxon>Oceanospirillales</taxon>
        <taxon>Alcanivoracaceae</taxon>
        <taxon>Alcanivorax</taxon>
    </lineage>
</organism>
<keyword id="KW-1185">Reference proteome</keyword>
<keyword id="KW-0687">Ribonucleoprotein</keyword>
<keyword id="KW-0689">Ribosomal protein</keyword>
<reference key="1">
    <citation type="journal article" date="2006" name="Nat. Biotechnol.">
        <title>Genome sequence of the ubiquitous hydrocarbon-degrading marine bacterium Alcanivorax borkumensis.</title>
        <authorList>
            <person name="Schneiker S."/>
            <person name="Martins dos Santos V.A.P."/>
            <person name="Bartels D."/>
            <person name="Bekel T."/>
            <person name="Brecht M."/>
            <person name="Buhrmester J."/>
            <person name="Chernikova T.N."/>
            <person name="Denaro R."/>
            <person name="Ferrer M."/>
            <person name="Gertler C."/>
            <person name="Goesmann A."/>
            <person name="Golyshina O.V."/>
            <person name="Kaminski F."/>
            <person name="Khachane A.N."/>
            <person name="Lang S."/>
            <person name="Linke B."/>
            <person name="McHardy A.C."/>
            <person name="Meyer F."/>
            <person name="Nechitaylo T."/>
            <person name="Puehler A."/>
            <person name="Regenhardt D."/>
            <person name="Rupp O."/>
            <person name="Sabirova J.S."/>
            <person name="Selbitschka W."/>
            <person name="Yakimov M.M."/>
            <person name="Timmis K.N."/>
            <person name="Vorhoelter F.-J."/>
            <person name="Weidner S."/>
            <person name="Kaiser O."/>
            <person name="Golyshin P.N."/>
        </authorList>
    </citation>
    <scope>NUCLEOTIDE SEQUENCE [LARGE SCALE GENOMIC DNA]</scope>
    <source>
        <strain>ATCC 700651 / DSM 11573 / NCIMB 13689 / SK2</strain>
    </source>
</reference>
<comment type="similarity">
    <text evidence="1">Belongs to the bacterial ribosomal protein bL36 family.</text>
</comment>
<dbReference type="EMBL" id="AM286690">
    <property type="protein sequence ID" value="CAL15866.1"/>
    <property type="molecule type" value="Genomic_DNA"/>
</dbReference>
<dbReference type="RefSeq" id="WP_008928865.1">
    <property type="nucleotide sequence ID" value="NC_008260.1"/>
</dbReference>
<dbReference type="SMR" id="Q0VSI2"/>
<dbReference type="STRING" id="393595.ABO_0418"/>
<dbReference type="GeneID" id="97272120"/>
<dbReference type="KEGG" id="abo:ABO_0418"/>
<dbReference type="eggNOG" id="COG0257">
    <property type="taxonomic scope" value="Bacteria"/>
</dbReference>
<dbReference type="HOGENOM" id="CLU_135723_6_2_6"/>
<dbReference type="OrthoDB" id="9802520at2"/>
<dbReference type="Proteomes" id="UP000008871">
    <property type="component" value="Chromosome"/>
</dbReference>
<dbReference type="GO" id="GO:0005737">
    <property type="term" value="C:cytoplasm"/>
    <property type="evidence" value="ECO:0007669"/>
    <property type="project" value="UniProtKB-ARBA"/>
</dbReference>
<dbReference type="GO" id="GO:1990904">
    <property type="term" value="C:ribonucleoprotein complex"/>
    <property type="evidence" value="ECO:0007669"/>
    <property type="project" value="UniProtKB-KW"/>
</dbReference>
<dbReference type="GO" id="GO:0005840">
    <property type="term" value="C:ribosome"/>
    <property type="evidence" value="ECO:0007669"/>
    <property type="project" value="UniProtKB-KW"/>
</dbReference>
<dbReference type="GO" id="GO:0003735">
    <property type="term" value="F:structural constituent of ribosome"/>
    <property type="evidence" value="ECO:0007669"/>
    <property type="project" value="InterPro"/>
</dbReference>
<dbReference type="GO" id="GO:0006412">
    <property type="term" value="P:translation"/>
    <property type="evidence" value="ECO:0007669"/>
    <property type="project" value="UniProtKB-UniRule"/>
</dbReference>
<dbReference type="HAMAP" id="MF_00251">
    <property type="entry name" value="Ribosomal_bL36"/>
    <property type="match status" value="1"/>
</dbReference>
<dbReference type="InterPro" id="IPR000473">
    <property type="entry name" value="Ribosomal_bL36"/>
</dbReference>
<dbReference type="InterPro" id="IPR035977">
    <property type="entry name" value="Ribosomal_bL36_sp"/>
</dbReference>
<dbReference type="NCBIfam" id="TIGR01022">
    <property type="entry name" value="rpmJ_bact"/>
    <property type="match status" value="1"/>
</dbReference>
<dbReference type="PANTHER" id="PTHR42888">
    <property type="entry name" value="50S RIBOSOMAL PROTEIN L36, CHLOROPLASTIC"/>
    <property type="match status" value="1"/>
</dbReference>
<dbReference type="PANTHER" id="PTHR42888:SF1">
    <property type="entry name" value="LARGE RIBOSOMAL SUBUNIT PROTEIN BL36C"/>
    <property type="match status" value="1"/>
</dbReference>
<dbReference type="Pfam" id="PF00444">
    <property type="entry name" value="Ribosomal_L36"/>
    <property type="match status" value="1"/>
</dbReference>
<dbReference type="SUPFAM" id="SSF57840">
    <property type="entry name" value="Ribosomal protein L36"/>
    <property type="match status" value="1"/>
</dbReference>
<dbReference type="PROSITE" id="PS00828">
    <property type="entry name" value="RIBOSOMAL_L36"/>
    <property type="match status" value="1"/>
</dbReference>
<accession>Q0VSI2</accession>